<gene>
    <name evidence="1" type="primary">rnpA</name>
    <name type="ordered locus">ACL_1432</name>
</gene>
<reference key="1">
    <citation type="journal article" date="2011" name="J. Bacteriol.">
        <title>Complete genome and proteome of Acholeplasma laidlawii.</title>
        <authorList>
            <person name="Lazarev V.N."/>
            <person name="Levitskii S.A."/>
            <person name="Basovskii Y.I."/>
            <person name="Chukin M.M."/>
            <person name="Akopian T.A."/>
            <person name="Vereshchagin V.V."/>
            <person name="Kostrjukova E.S."/>
            <person name="Kovaleva G.Y."/>
            <person name="Kazanov M.D."/>
            <person name="Malko D.B."/>
            <person name="Vitreschak A.G."/>
            <person name="Sernova N.V."/>
            <person name="Gelfand M.S."/>
            <person name="Demina I.A."/>
            <person name="Serebryakova M.V."/>
            <person name="Galyamina M.A."/>
            <person name="Vtyurin N.N."/>
            <person name="Rogov S.I."/>
            <person name="Alexeev D.G."/>
            <person name="Ladygina V.G."/>
            <person name="Govorun V.M."/>
        </authorList>
    </citation>
    <scope>NUCLEOTIDE SEQUENCE [LARGE SCALE GENOMIC DNA]</scope>
    <source>
        <strain>PG-8A</strain>
    </source>
</reference>
<dbReference type="EC" id="3.1.26.5" evidence="1"/>
<dbReference type="EMBL" id="CP000896">
    <property type="protein sequence ID" value="ABX82023.1"/>
    <property type="molecule type" value="Genomic_DNA"/>
</dbReference>
<dbReference type="RefSeq" id="WP_012243354.1">
    <property type="nucleotide sequence ID" value="NC_010163.1"/>
</dbReference>
<dbReference type="SMR" id="A9NE63"/>
<dbReference type="STRING" id="441768.ACL_1432"/>
<dbReference type="GeneID" id="41339559"/>
<dbReference type="KEGG" id="acl:ACL_1432"/>
<dbReference type="eggNOG" id="COG0594">
    <property type="taxonomic scope" value="Bacteria"/>
</dbReference>
<dbReference type="HOGENOM" id="CLU_117179_9_1_14"/>
<dbReference type="Proteomes" id="UP000008558">
    <property type="component" value="Chromosome"/>
</dbReference>
<dbReference type="GO" id="GO:0030677">
    <property type="term" value="C:ribonuclease P complex"/>
    <property type="evidence" value="ECO:0007669"/>
    <property type="project" value="TreeGrafter"/>
</dbReference>
<dbReference type="GO" id="GO:0042781">
    <property type="term" value="F:3'-tRNA processing endoribonuclease activity"/>
    <property type="evidence" value="ECO:0007669"/>
    <property type="project" value="TreeGrafter"/>
</dbReference>
<dbReference type="GO" id="GO:0004526">
    <property type="term" value="F:ribonuclease P activity"/>
    <property type="evidence" value="ECO:0007669"/>
    <property type="project" value="UniProtKB-UniRule"/>
</dbReference>
<dbReference type="GO" id="GO:0000049">
    <property type="term" value="F:tRNA binding"/>
    <property type="evidence" value="ECO:0007669"/>
    <property type="project" value="UniProtKB-UniRule"/>
</dbReference>
<dbReference type="GO" id="GO:0001682">
    <property type="term" value="P:tRNA 5'-leader removal"/>
    <property type="evidence" value="ECO:0007669"/>
    <property type="project" value="UniProtKB-UniRule"/>
</dbReference>
<dbReference type="Gene3D" id="3.30.230.10">
    <property type="match status" value="1"/>
</dbReference>
<dbReference type="HAMAP" id="MF_00227">
    <property type="entry name" value="RNase_P"/>
    <property type="match status" value="1"/>
</dbReference>
<dbReference type="InterPro" id="IPR020568">
    <property type="entry name" value="Ribosomal_Su5_D2-typ_SF"/>
</dbReference>
<dbReference type="InterPro" id="IPR014721">
    <property type="entry name" value="Ribsml_uS5_D2-typ_fold_subgr"/>
</dbReference>
<dbReference type="InterPro" id="IPR000100">
    <property type="entry name" value="RNase_P"/>
</dbReference>
<dbReference type="InterPro" id="IPR020539">
    <property type="entry name" value="RNase_P_CS"/>
</dbReference>
<dbReference type="NCBIfam" id="TIGR00188">
    <property type="entry name" value="rnpA"/>
    <property type="match status" value="1"/>
</dbReference>
<dbReference type="PANTHER" id="PTHR33992">
    <property type="entry name" value="RIBONUCLEASE P PROTEIN COMPONENT"/>
    <property type="match status" value="1"/>
</dbReference>
<dbReference type="PANTHER" id="PTHR33992:SF1">
    <property type="entry name" value="RIBONUCLEASE P PROTEIN COMPONENT"/>
    <property type="match status" value="1"/>
</dbReference>
<dbReference type="Pfam" id="PF00825">
    <property type="entry name" value="Ribonuclease_P"/>
    <property type="match status" value="1"/>
</dbReference>
<dbReference type="SUPFAM" id="SSF54211">
    <property type="entry name" value="Ribosomal protein S5 domain 2-like"/>
    <property type="match status" value="1"/>
</dbReference>
<dbReference type="PROSITE" id="PS00648">
    <property type="entry name" value="RIBONUCLEASE_P"/>
    <property type="match status" value="1"/>
</dbReference>
<proteinExistence type="inferred from homology"/>
<protein>
    <recommendedName>
        <fullName evidence="1">Ribonuclease P protein component</fullName>
        <shortName evidence="1">RNase P protein</shortName>
        <shortName evidence="1">RNaseP protein</shortName>
        <ecNumber evidence="1">3.1.26.5</ecNumber>
    </recommendedName>
    <alternativeName>
        <fullName evidence="1">Protein C5</fullName>
    </alternativeName>
</protein>
<keyword id="KW-0255">Endonuclease</keyword>
<keyword id="KW-0378">Hydrolase</keyword>
<keyword id="KW-0540">Nuclease</keyword>
<keyword id="KW-1185">Reference proteome</keyword>
<keyword id="KW-0694">RNA-binding</keyword>
<keyword id="KW-0819">tRNA processing</keyword>
<feature type="chain" id="PRO_1000078186" description="Ribonuclease P protein component">
    <location>
        <begin position="1"/>
        <end position="116"/>
    </location>
</feature>
<sequence>MKRVYSIKSKNELDLVFKEKKSVGNGYFVIYFIPHETPHFKYAISIGKKFGNAVERNQAKRRLRYIVSNYSNYINPKYRFVIVVRPQSNLLPYDLIKENITKLLIKAKLIEKEAQN</sequence>
<organism>
    <name type="scientific">Acholeplasma laidlawii (strain PG-8A)</name>
    <dbReference type="NCBI Taxonomy" id="441768"/>
    <lineage>
        <taxon>Bacteria</taxon>
        <taxon>Bacillati</taxon>
        <taxon>Mycoplasmatota</taxon>
        <taxon>Mollicutes</taxon>
        <taxon>Acholeplasmatales</taxon>
        <taxon>Acholeplasmataceae</taxon>
        <taxon>Acholeplasma</taxon>
    </lineage>
</organism>
<evidence type="ECO:0000255" key="1">
    <source>
        <dbReference type="HAMAP-Rule" id="MF_00227"/>
    </source>
</evidence>
<accession>A9NE63</accession>
<name>RNPA_ACHLI</name>
<comment type="function">
    <text evidence="1">RNaseP catalyzes the removal of the 5'-leader sequence from pre-tRNA to produce the mature 5'-terminus. It can also cleave other RNA substrates such as 4.5S RNA. The protein component plays an auxiliary but essential role in vivo by binding to the 5'-leader sequence and broadening the substrate specificity of the ribozyme.</text>
</comment>
<comment type="catalytic activity">
    <reaction evidence="1">
        <text>Endonucleolytic cleavage of RNA, removing 5'-extranucleotides from tRNA precursor.</text>
        <dbReference type="EC" id="3.1.26.5"/>
    </reaction>
</comment>
<comment type="subunit">
    <text evidence="1">Consists of a catalytic RNA component (M1 or rnpB) and a protein subunit.</text>
</comment>
<comment type="similarity">
    <text evidence="1">Belongs to the RnpA family.</text>
</comment>